<reference evidence="6" key="1">
    <citation type="journal article" date="1996" name="Phytochemistry">
        <title>Primary structure of a Kunitz-type trypsin inhibitor from Enterolobium contortisiliquum seeds.</title>
        <authorList>
            <person name="Batista I.F."/>
            <person name="Oliva M.L."/>
            <person name="Araujo M.S."/>
            <person name="Sampaio M.U."/>
            <person name="Richardson M."/>
            <person name="Fritz H."/>
            <person name="Sampaio C.A."/>
        </authorList>
    </citation>
    <scope>PROTEIN SEQUENCE</scope>
    <scope>FUNCTION</scope>
    <scope>BIOPHYSICOCHEMICAL PROPERTIES</scope>
    <scope>SUBUNIT</scope>
    <source>
        <tissue evidence="4">Seed</tissue>
    </source>
</reference>
<keyword id="KW-0002">3D-structure</keyword>
<keyword id="KW-0903">Direct protein sequencing</keyword>
<keyword id="KW-1015">Disulfide bond</keyword>
<keyword id="KW-0646">Protease inhibitor</keyword>
<keyword id="KW-0722">Serine protease inhibitor</keyword>
<sequence>KELLDSDGDILRNGGTYYILPALRGKGGGLELAKTGDETCPLNVVQARGETKRGRPAIIWTPPRIAILTPAFYLNIEFQTKDLPACLREYSRLPREEEQHSEVKLAPKEEAAAFGXEKLKPYRDDYKIVYCEGGSDDDSCKDLGISIDDENNRRLVVKDGDPLAVRFVKAHRRG</sequence>
<evidence type="ECO:0000250" key="1">
    <source>
        <dbReference type="UniProtKB" id="P24924"/>
    </source>
</evidence>
<evidence type="ECO:0000250" key="2">
    <source>
        <dbReference type="UniProtKB" id="P32733"/>
    </source>
</evidence>
<evidence type="ECO:0000255" key="3"/>
<evidence type="ECO:0000269" key="4">
    <source>
    </source>
</evidence>
<evidence type="ECO:0000303" key="5">
    <source>
    </source>
</evidence>
<evidence type="ECO:0000305" key="6"/>
<evidence type="ECO:0007829" key="7">
    <source>
        <dbReference type="PDB" id="4J2K"/>
    </source>
</evidence>
<comment type="function">
    <text evidence="4">Inhibits trypsin and chymotrypsin with a 1:1 stoichiometry, with dissociation constants of 1.56 nM and 120 nM respectively. Inhibits plasma kallikrein, factor XIIa and plasmin with dissociation constants of 5.0 nM, 150 nM and 18 nM respectively. Does not inhibit factor Xa, thrombin, tissue kallikrein or cysteine proteinases such as papain and bromelain.</text>
</comment>
<comment type="biophysicochemical properties">
    <phDependence>
        <text evidence="4">Retains activity after incubation for 10 minutes at pH 2.0 to 12.0.</text>
    </phDependence>
    <temperatureDependence>
        <text evidence="4">Activity is retained when heated for 10 minutes up to 60 degrees Celsius. Inactive at 100 degrees Celsius.</text>
    </temperatureDependence>
</comment>
<comment type="subunit">
    <text evidence="4">Heterodimer of an alpha and a beta chain linked by a disulfide bond.</text>
</comment>
<comment type="similarity">
    <text evidence="3">Belongs to the protease inhibitor I3 (leguminous Kunitz-type inhibitor) family.</text>
</comment>
<organism>
    <name type="scientific">Enterolobium contortisiliquum</name>
    <name type="common">Pacara earpod tree</name>
    <name type="synonym">Mimosa contortisiliqua</name>
    <dbReference type="NCBI Taxonomy" id="55671"/>
    <lineage>
        <taxon>Eukaryota</taxon>
        <taxon>Viridiplantae</taxon>
        <taxon>Streptophyta</taxon>
        <taxon>Embryophyta</taxon>
        <taxon>Tracheophyta</taxon>
        <taxon>Spermatophyta</taxon>
        <taxon>Magnoliopsida</taxon>
        <taxon>eudicotyledons</taxon>
        <taxon>Gunneridae</taxon>
        <taxon>Pentapetalae</taxon>
        <taxon>rosids</taxon>
        <taxon>fabids</taxon>
        <taxon>Fabales</taxon>
        <taxon>Fabaceae</taxon>
        <taxon>Caesalpinioideae</taxon>
        <taxon>mimosoid clade</taxon>
        <taxon>Ingeae</taxon>
        <taxon>Enterolobium</taxon>
    </lineage>
</organism>
<protein>
    <recommendedName>
        <fullName evidence="5">Trypsin inhibitor</fullName>
        <shortName evidence="5">EcTI</shortName>
    </recommendedName>
    <component>
        <recommendedName>
            <fullName evidence="5">Trypsin inhibitor alpha chain</fullName>
        </recommendedName>
    </component>
    <component>
        <recommendedName>
            <fullName evidence="5">Trypsin inhibitor beta chain</fullName>
        </recommendedName>
    </component>
</protein>
<dbReference type="PDB" id="4J2K">
    <property type="method" value="X-ray"/>
    <property type="resolution" value="1.75 A"/>
    <property type="chains" value="A/B=1-174"/>
</dbReference>
<dbReference type="PDB" id="4J2Y">
    <property type="method" value="X-ray"/>
    <property type="resolution" value="2.00 A"/>
    <property type="chains" value="A=1-174"/>
</dbReference>
<dbReference type="PDBsum" id="4J2K"/>
<dbReference type="PDBsum" id="4J2Y"/>
<dbReference type="SMR" id="P86451"/>
<dbReference type="EvolutionaryTrace" id="P86451"/>
<dbReference type="GO" id="GO:0004867">
    <property type="term" value="F:serine-type endopeptidase inhibitor activity"/>
    <property type="evidence" value="ECO:0007669"/>
    <property type="project" value="UniProtKB-KW"/>
</dbReference>
<dbReference type="CDD" id="cd23365">
    <property type="entry name" value="beta-trefoil_STI_LlTI-like"/>
    <property type="match status" value="1"/>
</dbReference>
<dbReference type="Gene3D" id="2.80.10.50">
    <property type="match status" value="1"/>
</dbReference>
<dbReference type="InterPro" id="IPR011065">
    <property type="entry name" value="Kunitz_inhibitor_STI-like_sf"/>
</dbReference>
<dbReference type="InterPro" id="IPR002160">
    <property type="entry name" value="Prot_inh_Kunz-lg"/>
</dbReference>
<dbReference type="PANTHER" id="PTHR33107">
    <property type="entry name" value="KUNITZ TRYPSIN INHIBITOR 2"/>
    <property type="match status" value="1"/>
</dbReference>
<dbReference type="PANTHER" id="PTHR33107:SF81">
    <property type="entry name" value="TRYPSIN INHIBITOR A"/>
    <property type="match status" value="1"/>
</dbReference>
<dbReference type="Pfam" id="PF00197">
    <property type="entry name" value="Kunitz_legume"/>
    <property type="match status" value="1"/>
</dbReference>
<dbReference type="PRINTS" id="PR00291">
    <property type="entry name" value="KUNITZINHBTR"/>
</dbReference>
<dbReference type="SMART" id="SM00452">
    <property type="entry name" value="STI"/>
    <property type="match status" value="1"/>
</dbReference>
<dbReference type="SUPFAM" id="SSF50386">
    <property type="entry name" value="STI-like"/>
    <property type="match status" value="1"/>
</dbReference>
<dbReference type="PROSITE" id="PS00283">
    <property type="entry name" value="SOYBEAN_KUNITZ"/>
    <property type="match status" value="1"/>
</dbReference>
<name>ITRY_ENTCO</name>
<proteinExistence type="evidence at protein level"/>
<feature type="chain" id="PRO_0000392635" description="Trypsin inhibitor alpha chain" evidence="4">
    <location>
        <begin position="1"/>
        <end position="134"/>
    </location>
</feature>
<feature type="chain" id="PRO_0000392636" description="Trypsin inhibitor beta chain" evidence="4">
    <location>
        <begin position="135"/>
        <end position="174"/>
    </location>
</feature>
<feature type="site" description="Reactive bond for trypsin" evidence="2">
    <location>
        <begin position="64"/>
        <end position="65"/>
    </location>
</feature>
<feature type="disulfide bond" evidence="1">
    <location>
        <begin position="40"/>
        <end position="86"/>
    </location>
</feature>
<feature type="disulfide bond" description="Interchain (between alpha and beta chains)" evidence="1">
    <location>
        <begin position="131"/>
        <end position="140"/>
    </location>
</feature>
<feature type="strand" evidence="7">
    <location>
        <begin position="15"/>
        <end position="26"/>
    </location>
</feature>
<feature type="strand" evidence="7">
    <location>
        <begin position="30"/>
        <end position="33"/>
    </location>
</feature>
<feature type="strand" evidence="7">
    <location>
        <begin position="43"/>
        <end position="46"/>
    </location>
</feature>
<feature type="strand" evidence="7">
    <location>
        <begin position="57"/>
        <end position="60"/>
    </location>
</feature>
<feature type="strand" evidence="7">
    <location>
        <begin position="74"/>
        <end position="78"/>
    </location>
</feature>
<feature type="turn" evidence="7">
    <location>
        <begin position="85"/>
        <end position="89"/>
    </location>
</feature>
<feature type="strand" evidence="7">
    <location>
        <begin position="93"/>
        <end position="97"/>
    </location>
</feature>
<feature type="turn" evidence="7">
    <location>
        <begin position="99"/>
        <end position="101"/>
    </location>
</feature>
<feature type="strand" evidence="7">
    <location>
        <begin position="102"/>
        <end position="105"/>
    </location>
</feature>
<feature type="helix" evidence="7">
    <location>
        <begin position="111"/>
        <end position="113"/>
    </location>
</feature>
<feature type="strand" evidence="7">
    <location>
        <begin position="117"/>
        <end position="122"/>
    </location>
</feature>
<feature type="strand" evidence="7">
    <location>
        <begin position="125"/>
        <end position="131"/>
    </location>
</feature>
<feature type="strand" evidence="7">
    <location>
        <begin position="140"/>
        <end position="147"/>
    </location>
</feature>
<feature type="strand" evidence="7">
    <location>
        <begin position="153"/>
        <end position="157"/>
    </location>
</feature>
<feature type="strand" evidence="7">
    <location>
        <begin position="164"/>
        <end position="169"/>
    </location>
</feature>
<accession>P86451</accession>